<name>RNY_MYCGE</name>
<protein>
    <recommendedName>
        <fullName evidence="1">Ribonuclease Y</fullName>
        <shortName evidence="1">RNase Y</shortName>
        <ecNumber evidence="1">3.1.-.-</ecNumber>
    </recommendedName>
</protein>
<reference key="1">
    <citation type="journal article" date="1995" name="Science">
        <title>The minimal gene complement of Mycoplasma genitalium.</title>
        <authorList>
            <person name="Fraser C.M."/>
            <person name="Gocayne J.D."/>
            <person name="White O."/>
            <person name="Adams M.D."/>
            <person name="Clayton R.A."/>
            <person name="Fleischmann R.D."/>
            <person name="Bult C.J."/>
            <person name="Kerlavage A.R."/>
            <person name="Sutton G.G."/>
            <person name="Kelley J.M."/>
            <person name="Fritchman J.L."/>
            <person name="Weidman J.F."/>
            <person name="Small K.V."/>
            <person name="Sandusky M."/>
            <person name="Fuhrmann J.L."/>
            <person name="Nguyen D.T."/>
            <person name="Utterback T.R."/>
            <person name="Saudek D.M."/>
            <person name="Phillips C.A."/>
            <person name="Merrick J.M."/>
            <person name="Tomb J.-F."/>
            <person name="Dougherty B.A."/>
            <person name="Bott K.F."/>
            <person name="Hu P.-C."/>
            <person name="Lucier T.S."/>
            <person name="Peterson S.N."/>
            <person name="Smith H.O."/>
            <person name="Hutchison C.A. III"/>
            <person name="Venter J.C."/>
        </authorList>
    </citation>
    <scope>NUCLEOTIDE SEQUENCE [LARGE SCALE GENOMIC DNA]</scope>
    <source>
        <strain>ATCC 33530 / DSM 19775 / NCTC 10195 / G37</strain>
    </source>
</reference>
<feature type="chain" id="PRO_0000163782" description="Ribonuclease Y">
    <location>
        <begin position="1"/>
        <end position="484"/>
    </location>
</feature>
<feature type="transmembrane region" description="Helical" evidence="1">
    <location>
        <begin position="18"/>
        <end position="38"/>
    </location>
</feature>
<feature type="domain" description="KH" evidence="1">
    <location>
        <begin position="166"/>
        <end position="234"/>
    </location>
</feature>
<feature type="domain" description="HD" evidence="2">
    <location>
        <begin position="293"/>
        <end position="385"/>
    </location>
</feature>
<keyword id="KW-1003">Cell membrane</keyword>
<keyword id="KW-0255">Endonuclease</keyword>
<keyword id="KW-0378">Hydrolase</keyword>
<keyword id="KW-0472">Membrane</keyword>
<keyword id="KW-0540">Nuclease</keyword>
<keyword id="KW-1185">Reference proteome</keyword>
<keyword id="KW-0694">RNA-binding</keyword>
<keyword id="KW-0812">Transmembrane</keyword>
<keyword id="KW-1133">Transmembrane helix</keyword>
<evidence type="ECO:0000255" key="1">
    <source>
        <dbReference type="HAMAP-Rule" id="MF_00335"/>
    </source>
</evidence>
<evidence type="ECO:0000255" key="2">
    <source>
        <dbReference type="PROSITE-ProRule" id="PRU01175"/>
    </source>
</evidence>
<gene>
    <name evidence="1" type="primary">rny</name>
    <name type="ordered locus">MG130</name>
</gene>
<sequence length="484" mass="56033">MNNNITNSIAQLFFNTSFFAFLFLIIIAFNLCLFAYLYFQYRIYKKNPKKANNFKANEYEKIKLLKNQNFTESNKLIATTNELNELTSQLDNILVRIINKPLAKLVNDFLDEQIKQIVKLDKNSSDFHSESDNLPFYTKLFNDFHFGVDKLININIKNPLYNWVYSPSFLISESDFRKLNGISGINKKLLVEKLRIEDIVFTDLNKKYEVNVLTESPIKAQKTVLTVRNILMNDYVDNERIESYVQQANFFFTEHCKKIGKEILESLNIFISSSSLHRHFGFLAFRYSFGQNVLSHSLETAFLTAHLAALIELDSELSLKCGLLHDIGKSNDDNGKESHTITGAKLAEQFQLPDDIKYTIANHHNKHIDNTYCRLTQIADKLSAARIGARSDSSLLFKQLKDELKKIVDKTINNFHTTILLGQSGRRLMIWLETKNQNQLLSNEQIIEMVEKIKAEIAKNPITNHFPIKVVIRYNFEHSFNTKS</sequence>
<dbReference type="EC" id="3.1.-.-" evidence="1"/>
<dbReference type="EMBL" id="L43967">
    <property type="protein sequence ID" value="AAC71348.1"/>
    <property type="molecule type" value="Genomic_DNA"/>
</dbReference>
<dbReference type="PIR" id="D64214">
    <property type="entry name" value="D64214"/>
</dbReference>
<dbReference type="RefSeq" id="WP_010869346.1">
    <property type="nucleotide sequence ID" value="NC_000908.2"/>
</dbReference>
<dbReference type="STRING" id="243273.MG_130"/>
<dbReference type="GeneID" id="88282254"/>
<dbReference type="KEGG" id="mge:MG_130"/>
<dbReference type="eggNOG" id="COG1418">
    <property type="taxonomic scope" value="Bacteria"/>
</dbReference>
<dbReference type="HOGENOM" id="CLU_563624_0_0_14"/>
<dbReference type="InParanoid" id="P47376"/>
<dbReference type="OrthoDB" id="9803205at2"/>
<dbReference type="BioCyc" id="MGEN243273:G1GJ2-143-MONOMER"/>
<dbReference type="Proteomes" id="UP000000807">
    <property type="component" value="Chromosome"/>
</dbReference>
<dbReference type="GO" id="GO:0005886">
    <property type="term" value="C:plasma membrane"/>
    <property type="evidence" value="ECO:0007669"/>
    <property type="project" value="UniProtKB-SubCell"/>
</dbReference>
<dbReference type="GO" id="GO:0003723">
    <property type="term" value="F:RNA binding"/>
    <property type="evidence" value="ECO:0007669"/>
    <property type="project" value="UniProtKB-UniRule"/>
</dbReference>
<dbReference type="GO" id="GO:0004521">
    <property type="term" value="F:RNA endonuclease activity"/>
    <property type="evidence" value="ECO:0007669"/>
    <property type="project" value="UniProtKB-UniRule"/>
</dbReference>
<dbReference type="GO" id="GO:0006402">
    <property type="term" value="P:mRNA catabolic process"/>
    <property type="evidence" value="ECO:0007669"/>
    <property type="project" value="UniProtKB-UniRule"/>
</dbReference>
<dbReference type="CDD" id="cd00077">
    <property type="entry name" value="HDc"/>
    <property type="match status" value="1"/>
</dbReference>
<dbReference type="Gene3D" id="1.10.3210.10">
    <property type="entry name" value="Hypothetical protein af1432"/>
    <property type="match status" value="1"/>
</dbReference>
<dbReference type="HAMAP" id="MF_00335">
    <property type="entry name" value="RNase_Y"/>
    <property type="match status" value="1"/>
</dbReference>
<dbReference type="InterPro" id="IPR003607">
    <property type="entry name" value="HD/PDEase_dom"/>
</dbReference>
<dbReference type="InterPro" id="IPR006674">
    <property type="entry name" value="HD_domain"/>
</dbReference>
<dbReference type="InterPro" id="IPR006675">
    <property type="entry name" value="HDIG_dom"/>
</dbReference>
<dbReference type="InterPro" id="IPR017705">
    <property type="entry name" value="Ribonuclease_Y"/>
</dbReference>
<dbReference type="InterPro" id="IPR052340">
    <property type="entry name" value="RNase_Y/CdgJ"/>
</dbReference>
<dbReference type="NCBIfam" id="TIGR00277">
    <property type="entry name" value="HDIG"/>
    <property type="match status" value="1"/>
</dbReference>
<dbReference type="NCBIfam" id="NF009346">
    <property type="entry name" value="PRK12705.1-3"/>
    <property type="match status" value="1"/>
</dbReference>
<dbReference type="PANTHER" id="PTHR33525">
    <property type="match status" value="1"/>
</dbReference>
<dbReference type="PANTHER" id="PTHR33525:SF3">
    <property type="entry name" value="RIBONUCLEASE Y"/>
    <property type="match status" value="1"/>
</dbReference>
<dbReference type="Pfam" id="PF01966">
    <property type="entry name" value="HD"/>
    <property type="match status" value="1"/>
</dbReference>
<dbReference type="SMART" id="SM00471">
    <property type="entry name" value="HDc"/>
    <property type="match status" value="1"/>
</dbReference>
<dbReference type="SUPFAM" id="SSF109604">
    <property type="entry name" value="HD-domain/PDEase-like"/>
    <property type="match status" value="1"/>
</dbReference>
<dbReference type="PROSITE" id="PS51831">
    <property type="entry name" value="HD"/>
    <property type="match status" value="1"/>
</dbReference>
<organism>
    <name type="scientific">Mycoplasma genitalium (strain ATCC 33530 / DSM 19775 / NCTC 10195 / G37)</name>
    <name type="common">Mycoplasmoides genitalium</name>
    <dbReference type="NCBI Taxonomy" id="243273"/>
    <lineage>
        <taxon>Bacteria</taxon>
        <taxon>Bacillati</taxon>
        <taxon>Mycoplasmatota</taxon>
        <taxon>Mycoplasmoidales</taxon>
        <taxon>Mycoplasmoidaceae</taxon>
        <taxon>Mycoplasmoides</taxon>
    </lineage>
</organism>
<proteinExistence type="inferred from homology"/>
<accession>P47376</accession>
<comment type="function">
    <text evidence="1">Endoribonuclease that initiates mRNA decay.</text>
</comment>
<comment type="subcellular location">
    <subcellularLocation>
        <location evidence="1">Cell membrane</location>
        <topology evidence="1">Single-pass membrane protein</topology>
    </subcellularLocation>
</comment>
<comment type="similarity">
    <text evidence="1">Belongs to the RNase Y family.</text>
</comment>